<feature type="chain" id="PRO_1000117989" description="dCTP deaminase">
    <location>
        <begin position="1"/>
        <end position="176"/>
    </location>
</feature>
<feature type="active site" description="Proton donor/acceptor" evidence="1">
    <location>
        <position position="125"/>
    </location>
</feature>
<feature type="binding site" evidence="1">
    <location>
        <begin position="99"/>
        <end position="104"/>
    </location>
    <ligand>
        <name>dCTP</name>
        <dbReference type="ChEBI" id="CHEBI:61481"/>
    </ligand>
</feature>
<feature type="binding site" evidence="1">
    <location>
        <position position="115"/>
    </location>
    <ligand>
        <name>dCTP</name>
        <dbReference type="ChEBI" id="CHEBI:61481"/>
    </ligand>
</feature>
<feature type="binding site" evidence="1">
    <location>
        <position position="163"/>
    </location>
    <ligand>
        <name>dCTP</name>
        <dbReference type="ChEBI" id="CHEBI:61481"/>
    </ligand>
</feature>
<keyword id="KW-0378">Hydrolase</keyword>
<keyword id="KW-0546">Nucleotide metabolism</keyword>
<keyword id="KW-0547">Nucleotide-binding</keyword>
<protein>
    <recommendedName>
        <fullName evidence="1">dCTP deaminase</fullName>
        <ecNumber evidence="1">3.5.4.13</ecNumber>
    </recommendedName>
    <alternativeName>
        <fullName evidence="1">Deoxycytidine triphosphate deaminase</fullName>
    </alternativeName>
</protein>
<name>DCD_PYRIL</name>
<comment type="function">
    <text evidence="1">Catalyzes the deamination of dCTP to dUTP.</text>
</comment>
<comment type="catalytic activity">
    <reaction evidence="1">
        <text>dCTP + H2O + H(+) = dUTP + NH4(+)</text>
        <dbReference type="Rhea" id="RHEA:22680"/>
        <dbReference type="ChEBI" id="CHEBI:15377"/>
        <dbReference type="ChEBI" id="CHEBI:15378"/>
        <dbReference type="ChEBI" id="CHEBI:28938"/>
        <dbReference type="ChEBI" id="CHEBI:61481"/>
        <dbReference type="ChEBI" id="CHEBI:61555"/>
        <dbReference type="EC" id="3.5.4.13"/>
    </reaction>
</comment>
<comment type="pathway">
    <text evidence="1">Pyrimidine metabolism; dUMP biosynthesis; dUMP from dCTP (dUTP route): step 1/2.</text>
</comment>
<comment type="subunit">
    <text evidence="1">Homotrimer.</text>
</comment>
<comment type="similarity">
    <text evidence="1">Belongs to the dCTP deaminase family.</text>
</comment>
<organism>
    <name type="scientific">Pyrobaculum islandicum (strain DSM 4184 / JCM 9189 / GEO3)</name>
    <dbReference type="NCBI Taxonomy" id="384616"/>
    <lineage>
        <taxon>Archaea</taxon>
        <taxon>Thermoproteota</taxon>
        <taxon>Thermoprotei</taxon>
        <taxon>Thermoproteales</taxon>
        <taxon>Thermoproteaceae</taxon>
        <taxon>Pyrobaculum</taxon>
    </lineage>
</organism>
<sequence length="176" mass="19403">MILANDELKKLISTGRLKVDPLAPDTVRENGLDLRIGGEYAIYAYEGAVVKPCELENARHLFRIVKADEVVIPPRNFVLLTTEEYVKMPDDVVGLANLRSTLARYGLVIPPTVVDAGFEGNITIEVVNESPNTIVLKRGMRFLHLILVKAEGRALYSGTYQGQRGVTPPKGLRGEC</sequence>
<proteinExistence type="inferred from homology"/>
<reference key="1">
    <citation type="submission" date="2006-12" db="EMBL/GenBank/DDBJ databases">
        <title>Complete sequence of Pyrobaculum islandicum DSM 4184.</title>
        <authorList>
            <person name="Copeland A."/>
            <person name="Lucas S."/>
            <person name="Lapidus A."/>
            <person name="Barry K."/>
            <person name="Detter J.C."/>
            <person name="Glavina del Rio T."/>
            <person name="Dalin E."/>
            <person name="Tice H."/>
            <person name="Pitluck S."/>
            <person name="Meincke L."/>
            <person name="Brettin T."/>
            <person name="Bruce D."/>
            <person name="Han C."/>
            <person name="Tapia R."/>
            <person name="Gilna P."/>
            <person name="Schmutz J."/>
            <person name="Larimer F."/>
            <person name="Land M."/>
            <person name="Hauser L."/>
            <person name="Kyrpides N."/>
            <person name="Mikhailova N."/>
            <person name="Cozen A.E."/>
            <person name="Fitz-Gibbon S.T."/>
            <person name="House C.H."/>
            <person name="Saltikov C."/>
            <person name="Lowe T."/>
            <person name="Richardson P."/>
        </authorList>
    </citation>
    <scope>NUCLEOTIDE SEQUENCE [LARGE SCALE GENOMIC DNA]</scope>
    <source>
        <strain>DSM 4184 / JCM 9189 / GEO3</strain>
    </source>
</reference>
<accession>A1RVJ1</accession>
<gene>
    <name evidence="1" type="primary">dcd</name>
    <name type="ordered locus">Pisl_1825</name>
</gene>
<dbReference type="EC" id="3.5.4.13" evidence="1"/>
<dbReference type="EMBL" id="CP000504">
    <property type="protein sequence ID" value="ABL88973.1"/>
    <property type="molecule type" value="Genomic_DNA"/>
</dbReference>
<dbReference type="RefSeq" id="WP_011763548.1">
    <property type="nucleotide sequence ID" value="NC_008701.1"/>
</dbReference>
<dbReference type="SMR" id="A1RVJ1"/>
<dbReference type="STRING" id="384616.Pisl_1825"/>
<dbReference type="GeneID" id="4617594"/>
<dbReference type="KEGG" id="pis:Pisl_1825"/>
<dbReference type="eggNOG" id="arCOG04048">
    <property type="taxonomic scope" value="Archaea"/>
</dbReference>
<dbReference type="HOGENOM" id="CLU_087476_3_0_2"/>
<dbReference type="OrthoDB" id="33242at2157"/>
<dbReference type="UniPathway" id="UPA00610">
    <property type="reaction ID" value="UER00665"/>
</dbReference>
<dbReference type="Proteomes" id="UP000002595">
    <property type="component" value="Chromosome"/>
</dbReference>
<dbReference type="GO" id="GO:0008829">
    <property type="term" value="F:dCTP deaminase activity"/>
    <property type="evidence" value="ECO:0007669"/>
    <property type="project" value="UniProtKB-UniRule"/>
</dbReference>
<dbReference type="GO" id="GO:0000166">
    <property type="term" value="F:nucleotide binding"/>
    <property type="evidence" value="ECO:0007669"/>
    <property type="project" value="UniProtKB-KW"/>
</dbReference>
<dbReference type="GO" id="GO:0006226">
    <property type="term" value="P:dUMP biosynthetic process"/>
    <property type="evidence" value="ECO:0007669"/>
    <property type="project" value="UniProtKB-UniPathway"/>
</dbReference>
<dbReference type="GO" id="GO:0006229">
    <property type="term" value="P:dUTP biosynthetic process"/>
    <property type="evidence" value="ECO:0007669"/>
    <property type="project" value="UniProtKB-UniRule"/>
</dbReference>
<dbReference type="CDD" id="cd07557">
    <property type="entry name" value="trimeric_dUTPase"/>
    <property type="match status" value="1"/>
</dbReference>
<dbReference type="Gene3D" id="2.70.40.10">
    <property type="match status" value="1"/>
</dbReference>
<dbReference type="HAMAP" id="MF_00146">
    <property type="entry name" value="dCTP_deaminase"/>
    <property type="match status" value="1"/>
</dbReference>
<dbReference type="InterPro" id="IPR011962">
    <property type="entry name" value="dCTP_deaminase"/>
</dbReference>
<dbReference type="InterPro" id="IPR036157">
    <property type="entry name" value="dUTPase-like_sf"/>
</dbReference>
<dbReference type="InterPro" id="IPR033704">
    <property type="entry name" value="dUTPase_trimeric"/>
</dbReference>
<dbReference type="NCBIfam" id="TIGR02274">
    <property type="entry name" value="dCTP_deam"/>
    <property type="match status" value="1"/>
</dbReference>
<dbReference type="PANTHER" id="PTHR42680">
    <property type="entry name" value="DCTP DEAMINASE"/>
    <property type="match status" value="1"/>
</dbReference>
<dbReference type="PANTHER" id="PTHR42680:SF3">
    <property type="entry name" value="DCTP DEAMINASE"/>
    <property type="match status" value="1"/>
</dbReference>
<dbReference type="Pfam" id="PF22769">
    <property type="entry name" value="DCD"/>
    <property type="match status" value="1"/>
</dbReference>
<dbReference type="SUPFAM" id="SSF51283">
    <property type="entry name" value="dUTPase-like"/>
    <property type="match status" value="1"/>
</dbReference>
<evidence type="ECO:0000255" key="1">
    <source>
        <dbReference type="HAMAP-Rule" id="MF_00146"/>
    </source>
</evidence>